<accession>Q1R342</accession>
<comment type="function">
    <text evidence="1">Di-iron-containing protein involved in the repair of iron-sulfur clusters damaged by oxidative and nitrosative stress conditions.</text>
</comment>
<comment type="subunit">
    <text evidence="1">Homodimer.</text>
</comment>
<comment type="subcellular location">
    <subcellularLocation>
        <location evidence="1">Cytoplasm</location>
    </subcellularLocation>
</comment>
<comment type="similarity">
    <text evidence="1">Belongs to the RIC family. YtfE subfamily.</text>
</comment>
<reference key="1">
    <citation type="journal article" date="2006" name="Proc. Natl. Acad. Sci. U.S.A.">
        <title>Identification of genes subject to positive selection in uropathogenic strains of Escherichia coli: a comparative genomics approach.</title>
        <authorList>
            <person name="Chen S.L."/>
            <person name="Hung C.-S."/>
            <person name="Xu J."/>
            <person name="Reigstad C.S."/>
            <person name="Magrini V."/>
            <person name="Sabo A."/>
            <person name="Blasiar D."/>
            <person name="Bieri T."/>
            <person name="Meyer R.R."/>
            <person name="Ozersky P."/>
            <person name="Armstrong J.R."/>
            <person name="Fulton R.S."/>
            <person name="Latreille J.P."/>
            <person name="Spieth J."/>
            <person name="Hooton T.M."/>
            <person name="Mardis E.R."/>
            <person name="Hultgren S.J."/>
            <person name="Gordon J.I."/>
        </authorList>
    </citation>
    <scope>NUCLEOTIDE SEQUENCE [LARGE SCALE GENOMIC DNA]</scope>
    <source>
        <strain>UTI89 / UPEC</strain>
    </source>
</reference>
<protein>
    <recommendedName>
        <fullName evidence="1">Iron-sulfur cluster repair protein YtfE</fullName>
    </recommendedName>
</protein>
<sequence>MAYRDQPLGELALSIPRASALFRKYDMDYCCGGKQTLARAAARKELDVDVIEAELAKLAEQPIEKDWRSAPLAEIIDHIIVRYHDRHREQLPELILQATKVERVHADKPSVPKGLTKYLTMLHEELSSHMMKEEQILFPMIKQGMGSQAMGPISVMESEHDEAGELLEVIKHTTNNVTPPPEACTTWKAMYNGINELIDDLMEHISLENNVLFPRALAGE</sequence>
<name>YTFE_ECOUT</name>
<dbReference type="EMBL" id="CP000243">
    <property type="protein sequence ID" value="ABE10222.1"/>
    <property type="molecule type" value="Genomic_DNA"/>
</dbReference>
<dbReference type="RefSeq" id="WP_000331451.1">
    <property type="nucleotide sequence ID" value="NZ_CP064825.1"/>
</dbReference>
<dbReference type="SMR" id="Q1R342"/>
<dbReference type="GeneID" id="89519204"/>
<dbReference type="KEGG" id="eci:UTI89_C4818"/>
<dbReference type="HOGENOM" id="CLU_076075_2_0_6"/>
<dbReference type="Proteomes" id="UP000001952">
    <property type="component" value="Chromosome"/>
</dbReference>
<dbReference type="GO" id="GO:0005737">
    <property type="term" value="C:cytoplasm"/>
    <property type="evidence" value="ECO:0007669"/>
    <property type="project" value="UniProtKB-SubCell"/>
</dbReference>
<dbReference type="GO" id="GO:0046872">
    <property type="term" value="F:metal ion binding"/>
    <property type="evidence" value="ECO:0007669"/>
    <property type="project" value="UniProtKB-KW"/>
</dbReference>
<dbReference type="GO" id="GO:0030091">
    <property type="term" value="P:protein repair"/>
    <property type="evidence" value="ECO:0007669"/>
    <property type="project" value="UniProtKB-UniRule"/>
</dbReference>
<dbReference type="GO" id="GO:0051409">
    <property type="term" value="P:response to nitrosative stress"/>
    <property type="evidence" value="ECO:0007669"/>
    <property type="project" value="UniProtKB-UniRule"/>
</dbReference>
<dbReference type="GO" id="GO:0006979">
    <property type="term" value="P:response to oxidative stress"/>
    <property type="evidence" value="ECO:0007669"/>
    <property type="project" value="UniProtKB-UniRule"/>
</dbReference>
<dbReference type="CDD" id="cd12108">
    <property type="entry name" value="Hr-like"/>
    <property type="match status" value="1"/>
</dbReference>
<dbReference type="FunFam" id="1.20.120.520:FF:000001">
    <property type="entry name" value="Iron-sulfur cluster repair protein YtfE"/>
    <property type="match status" value="1"/>
</dbReference>
<dbReference type="Gene3D" id="1.20.120.520">
    <property type="entry name" value="nmb1532 protein domain like"/>
    <property type="match status" value="1"/>
</dbReference>
<dbReference type="HAMAP" id="MF_01606">
    <property type="entry name" value="RIC_YtfE"/>
    <property type="match status" value="1"/>
</dbReference>
<dbReference type="InterPro" id="IPR023742">
    <property type="entry name" value="FeS-repair_YftE"/>
</dbReference>
<dbReference type="InterPro" id="IPR012312">
    <property type="entry name" value="Hemerythrin-like"/>
</dbReference>
<dbReference type="InterPro" id="IPR019903">
    <property type="entry name" value="RIC_family"/>
</dbReference>
<dbReference type="NCBIfam" id="TIGR03652">
    <property type="entry name" value="FeS_repair_RIC"/>
    <property type="match status" value="1"/>
</dbReference>
<dbReference type="NCBIfam" id="NF008221">
    <property type="entry name" value="PRK10992.1"/>
    <property type="match status" value="1"/>
</dbReference>
<dbReference type="PANTHER" id="PTHR36438">
    <property type="entry name" value="IRON-SULFUR CLUSTER REPAIR PROTEIN YTFE"/>
    <property type="match status" value="1"/>
</dbReference>
<dbReference type="PANTHER" id="PTHR36438:SF1">
    <property type="entry name" value="IRON-SULFUR CLUSTER REPAIR PROTEIN YTFE"/>
    <property type="match status" value="1"/>
</dbReference>
<dbReference type="Pfam" id="PF01814">
    <property type="entry name" value="Hemerythrin"/>
    <property type="match status" value="1"/>
</dbReference>
<dbReference type="Pfam" id="PF04405">
    <property type="entry name" value="ScdA_N"/>
    <property type="match status" value="1"/>
</dbReference>
<keyword id="KW-0963">Cytoplasm</keyword>
<keyword id="KW-0408">Iron</keyword>
<keyword id="KW-0479">Metal-binding</keyword>
<keyword id="KW-0346">Stress response</keyword>
<proteinExistence type="inferred from homology"/>
<feature type="chain" id="PRO_0000291696" description="Iron-sulfur cluster repair protein YtfE">
    <location>
        <begin position="1"/>
        <end position="220"/>
    </location>
</feature>
<organism>
    <name type="scientific">Escherichia coli (strain UTI89 / UPEC)</name>
    <dbReference type="NCBI Taxonomy" id="364106"/>
    <lineage>
        <taxon>Bacteria</taxon>
        <taxon>Pseudomonadati</taxon>
        <taxon>Pseudomonadota</taxon>
        <taxon>Gammaproteobacteria</taxon>
        <taxon>Enterobacterales</taxon>
        <taxon>Enterobacteriaceae</taxon>
        <taxon>Escherichia</taxon>
    </lineage>
</organism>
<evidence type="ECO:0000255" key="1">
    <source>
        <dbReference type="HAMAP-Rule" id="MF_01606"/>
    </source>
</evidence>
<gene>
    <name evidence="1" type="primary">ytfE</name>
    <name type="ordered locus">UTI89_C4818</name>
</gene>